<reference key="1">
    <citation type="journal article" date="2008" name="J. Bacteriol.">
        <title>The complete genome sequence of Escherichia coli DH10B: insights into the biology of a laboratory workhorse.</title>
        <authorList>
            <person name="Durfee T."/>
            <person name="Nelson R."/>
            <person name="Baldwin S."/>
            <person name="Plunkett G. III"/>
            <person name="Burland V."/>
            <person name="Mau B."/>
            <person name="Petrosino J.F."/>
            <person name="Qin X."/>
            <person name="Muzny D.M."/>
            <person name="Ayele M."/>
            <person name="Gibbs R.A."/>
            <person name="Csorgo B."/>
            <person name="Posfai G."/>
            <person name="Weinstock G.M."/>
            <person name="Blattner F.R."/>
        </authorList>
    </citation>
    <scope>NUCLEOTIDE SEQUENCE [LARGE SCALE GENOMIC DNA]</scope>
    <source>
        <strain>K12 / DH10B</strain>
    </source>
</reference>
<protein>
    <recommendedName>
        <fullName evidence="1">Crotonobetaine/carnitine--CoA ligase</fullName>
        <ecNumber evidence="1">6.2.1.48</ecNumber>
    </recommendedName>
</protein>
<sequence>MDIIGGQHLRQMWDDLADVYGHKTALICESSGGVVNRYSYLELNQEINRTANLFYTLGIRKGDKVALHLDNCPEFIFCWFGLAKIGAIMVPINARLLCEESAWILQNSQACLLVTSAQFYPMYQQIQQEDATQLRHICLTDVALPADDGVSSFTQLKNQQPATLCYAPPLSTDDTAEILFTSGTTSRPKGVVITHYNLRFAGYYSAWQCALRDDDVYLTVMPAFHIDCQCTAAMAAFSAGATFVLVEKYSARAFWGQVQKYRATVTECIPMMIRTLMVQPPSANDQQHRLREVMFYLNLSEQEKDAFCERFGVRLLTSYGMTETIVGIIGDRPGDKRRWPSIGRVGFCYEAEIRDDHNRPLPAGEIGEICIKGIPGKTIFKEYFLNPQATAKVLEADGWLHTGDTGYRDEEDFFYFVDRRCNMIKRGGENVSCVELENIIAAHPKIQDIVVVGIKDSIRDEAIKAFVVLNEGETLSEEEFFRFCEQNMAKFKVPSYLEIRKDLPRNCSGKIIRKNLK</sequence>
<accession>B1XBG2</accession>
<gene>
    <name evidence="1" type="primary">caiC</name>
    <name type="ordered locus">ECDH10B_0038</name>
</gene>
<feature type="chain" id="PRO_0000383396" description="Crotonobetaine/carnitine--CoA ligase">
    <location>
        <begin position="1"/>
        <end position="517"/>
    </location>
</feature>
<keyword id="KW-0436">Ligase</keyword>
<evidence type="ECO:0000255" key="1">
    <source>
        <dbReference type="HAMAP-Rule" id="MF_01524"/>
    </source>
</evidence>
<evidence type="ECO:0000305" key="2"/>
<organism>
    <name type="scientific">Escherichia coli (strain K12 / DH10B)</name>
    <dbReference type="NCBI Taxonomy" id="316385"/>
    <lineage>
        <taxon>Bacteria</taxon>
        <taxon>Pseudomonadati</taxon>
        <taxon>Pseudomonadota</taxon>
        <taxon>Gammaproteobacteria</taxon>
        <taxon>Enterobacterales</taxon>
        <taxon>Enterobacteriaceae</taxon>
        <taxon>Escherichia</taxon>
    </lineage>
</organism>
<name>CAIC_ECODH</name>
<proteinExistence type="inferred from homology"/>
<dbReference type="EC" id="6.2.1.48" evidence="1"/>
<dbReference type="EMBL" id="CP000948">
    <property type="protein sequence ID" value="ACB01242.1"/>
    <property type="status" value="ALT_INIT"/>
    <property type="molecule type" value="Genomic_DNA"/>
</dbReference>
<dbReference type="RefSeq" id="WP_001350478.1">
    <property type="nucleotide sequence ID" value="NC_010473.1"/>
</dbReference>
<dbReference type="SMR" id="B1XBG2"/>
<dbReference type="KEGG" id="ecd:ECDH10B_0038"/>
<dbReference type="HOGENOM" id="CLU_000022_59_0_6"/>
<dbReference type="UniPathway" id="UPA00117"/>
<dbReference type="GO" id="GO:0051108">
    <property type="term" value="F:carnitine-CoA ligase activity"/>
    <property type="evidence" value="ECO:0007669"/>
    <property type="project" value="InterPro"/>
</dbReference>
<dbReference type="GO" id="GO:0051109">
    <property type="term" value="F:crotonobetaine-CoA ligase activity"/>
    <property type="evidence" value="ECO:0007669"/>
    <property type="project" value="InterPro"/>
</dbReference>
<dbReference type="GO" id="GO:0031956">
    <property type="term" value="F:medium-chain fatty acid-CoA ligase activity"/>
    <property type="evidence" value="ECO:0007669"/>
    <property type="project" value="TreeGrafter"/>
</dbReference>
<dbReference type="GO" id="GO:0009437">
    <property type="term" value="P:carnitine metabolic process"/>
    <property type="evidence" value="ECO:0007669"/>
    <property type="project" value="UniProtKB-UniRule"/>
</dbReference>
<dbReference type="GO" id="GO:0006631">
    <property type="term" value="P:fatty acid metabolic process"/>
    <property type="evidence" value="ECO:0007669"/>
    <property type="project" value="TreeGrafter"/>
</dbReference>
<dbReference type="CDD" id="cd05934">
    <property type="entry name" value="FACL_DitJ_like"/>
    <property type="match status" value="1"/>
</dbReference>
<dbReference type="FunFam" id="3.30.300.30:FF:000011">
    <property type="entry name" value="Crotonobetaine/carnitine--CoA ligase"/>
    <property type="match status" value="1"/>
</dbReference>
<dbReference type="FunFam" id="3.40.50.12780:FF:000017">
    <property type="entry name" value="Crotonobetaine/carnitine--CoA ligase"/>
    <property type="match status" value="1"/>
</dbReference>
<dbReference type="Gene3D" id="3.30.300.30">
    <property type="match status" value="1"/>
</dbReference>
<dbReference type="Gene3D" id="3.40.50.12780">
    <property type="entry name" value="N-terminal domain of ligase-like"/>
    <property type="match status" value="1"/>
</dbReference>
<dbReference type="HAMAP" id="MF_01524">
    <property type="entry name" value="CaiC"/>
    <property type="match status" value="1"/>
</dbReference>
<dbReference type="InterPro" id="IPR025110">
    <property type="entry name" value="AMP-bd_C"/>
</dbReference>
<dbReference type="InterPro" id="IPR045851">
    <property type="entry name" value="AMP-bd_C_sf"/>
</dbReference>
<dbReference type="InterPro" id="IPR020845">
    <property type="entry name" value="AMP-binding_CS"/>
</dbReference>
<dbReference type="InterPro" id="IPR000873">
    <property type="entry name" value="AMP-dep_synth/lig_dom"/>
</dbReference>
<dbReference type="InterPro" id="IPR042099">
    <property type="entry name" value="ANL_N_sf"/>
</dbReference>
<dbReference type="InterPro" id="IPR023456">
    <property type="entry name" value="CaiC"/>
</dbReference>
<dbReference type="NCBIfam" id="NF005947">
    <property type="entry name" value="PRK08008.1"/>
    <property type="match status" value="1"/>
</dbReference>
<dbReference type="PANTHER" id="PTHR43201">
    <property type="entry name" value="ACYL-COA SYNTHETASE"/>
    <property type="match status" value="1"/>
</dbReference>
<dbReference type="PANTHER" id="PTHR43201:SF5">
    <property type="entry name" value="MEDIUM-CHAIN ACYL-COA LIGASE ACSF2, MITOCHONDRIAL"/>
    <property type="match status" value="1"/>
</dbReference>
<dbReference type="Pfam" id="PF00501">
    <property type="entry name" value="AMP-binding"/>
    <property type="match status" value="1"/>
</dbReference>
<dbReference type="Pfam" id="PF13193">
    <property type="entry name" value="AMP-binding_C"/>
    <property type="match status" value="1"/>
</dbReference>
<dbReference type="SUPFAM" id="SSF56801">
    <property type="entry name" value="Acetyl-CoA synthetase-like"/>
    <property type="match status" value="1"/>
</dbReference>
<dbReference type="PROSITE" id="PS00455">
    <property type="entry name" value="AMP_BINDING"/>
    <property type="match status" value="1"/>
</dbReference>
<comment type="function">
    <text evidence="1">Catalyzes the transfer of CoA to carnitine, generating the initial carnitinyl-CoA needed for the CaiB reaction cycle. Also has activity toward crotonobetaine and gamma-butyrobetaine.</text>
</comment>
<comment type="catalytic activity">
    <reaction evidence="1">
        <text>4-(trimethylamino)butanoate + ATP + CoA = 4-(trimethylamino)butanoyl-CoA + AMP + diphosphate</text>
        <dbReference type="Rhea" id="RHEA:55960"/>
        <dbReference type="ChEBI" id="CHEBI:16244"/>
        <dbReference type="ChEBI" id="CHEBI:30616"/>
        <dbReference type="ChEBI" id="CHEBI:33019"/>
        <dbReference type="ChEBI" id="CHEBI:57287"/>
        <dbReference type="ChEBI" id="CHEBI:61513"/>
        <dbReference type="ChEBI" id="CHEBI:456215"/>
        <dbReference type="EC" id="6.2.1.48"/>
    </reaction>
</comment>
<comment type="catalytic activity">
    <reaction evidence="1">
        <text>crotonobetaine + ATP + CoA = crotonobetainyl-CoA + AMP + diphosphate</text>
        <dbReference type="Rhea" id="RHEA:30079"/>
        <dbReference type="ChEBI" id="CHEBI:17237"/>
        <dbReference type="ChEBI" id="CHEBI:30616"/>
        <dbReference type="ChEBI" id="CHEBI:33019"/>
        <dbReference type="ChEBI" id="CHEBI:57287"/>
        <dbReference type="ChEBI" id="CHEBI:60933"/>
        <dbReference type="ChEBI" id="CHEBI:456215"/>
        <dbReference type="EC" id="6.2.1.48"/>
    </reaction>
</comment>
<comment type="catalytic activity">
    <reaction evidence="1">
        <text>(R)-carnitine + ATP + CoA = (R)-carnitinyl-CoA + AMP + diphosphate</text>
        <dbReference type="Rhea" id="RHEA:28514"/>
        <dbReference type="ChEBI" id="CHEBI:16347"/>
        <dbReference type="ChEBI" id="CHEBI:30616"/>
        <dbReference type="ChEBI" id="CHEBI:33019"/>
        <dbReference type="ChEBI" id="CHEBI:57287"/>
        <dbReference type="ChEBI" id="CHEBI:60932"/>
        <dbReference type="ChEBI" id="CHEBI:456215"/>
        <dbReference type="EC" id="6.2.1.48"/>
    </reaction>
</comment>
<comment type="pathway">
    <text evidence="1">Amine and polyamine metabolism; carnitine metabolism.</text>
</comment>
<comment type="similarity">
    <text evidence="1">Belongs to the ATP-dependent AMP-binding enzyme family.</text>
</comment>
<comment type="sequence caution" evidence="2">
    <conflict type="erroneous initiation">
        <sequence resource="EMBL-CDS" id="ACB01242"/>
    </conflict>
</comment>